<dbReference type="EC" id="6.3.5.7" evidence="1"/>
<dbReference type="EMBL" id="AE007317">
    <property type="protein sequence ID" value="AAK99198.1"/>
    <property type="molecule type" value="Genomic_DNA"/>
</dbReference>
<dbReference type="PIR" id="B97921">
    <property type="entry name" value="B97921"/>
</dbReference>
<dbReference type="RefSeq" id="NP_357988.1">
    <property type="nucleotide sequence ID" value="NC_003098.1"/>
</dbReference>
<dbReference type="RefSeq" id="WP_000143735.1">
    <property type="nucleotide sequence ID" value="NC_003098.1"/>
</dbReference>
<dbReference type="SMR" id="Q8DR10"/>
<dbReference type="STRING" id="171101.spr0394"/>
<dbReference type="KEGG" id="spr:spr0394"/>
<dbReference type="PATRIC" id="fig|171101.6.peg.437"/>
<dbReference type="eggNOG" id="COG0154">
    <property type="taxonomic scope" value="Bacteria"/>
</dbReference>
<dbReference type="HOGENOM" id="CLU_009600_0_3_9"/>
<dbReference type="Proteomes" id="UP000000586">
    <property type="component" value="Chromosome"/>
</dbReference>
<dbReference type="GO" id="GO:0030956">
    <property type="term" value="C:glutamyl-tRNA(Gln) amidotransferase complex"/>
    <property type="evidence" value="ECO:0007669"/>
    <property type="project" value="InterPro"/>
</dbReference>
<dbReference type="GO" id="GO:0005524">
    <property type="term" value="F:ATP binding"/>
    <property type="evidence" value="ECO:0007669"/>
    <property type="project" value="UniProtKB-KW"/>
</dbReference>
<dbReference type="GO" id="GO:0050567">
    <property type="term" value="F:glutaminyl-tRNA synthase (glutamine-hydrolyzing) activity"/>
    <property type="evidence" value="ECO:0007669"/>
    <property type="project" value="UniProtKB-UniRule"/>
</dbReference>
<dbReference type="GO" id="GO:0006412">
    <property type="term" value="P:translation"/>
    <property type="evidence" value="ECO:0007669"/>
    <property type="project" value="UniProtKB-UniRule"/>
</dbReference>
<dbReference type="Gene3D" id="3.90.1300.10">
    <property type="entry name" value="Amidase signature (AS) domain"/>
    <property type="match status" value="1"/>
</dbReference>
<dbReference type="HAMAP" id="MF_00120">
    <property type="entry name" value="GatA"/>
    <property type="match status" value="1"/>
</dbReference>
<dbReference type="InterPro" id="IPR000120">
    <property type="entry name" value="Amidase"/>
</dbReference>
<dbReference type="InterPro" id="IPR020556">
    <property type="entry name" value="Amidase_CS"/>
</dbReference>
<dbReference type="InterPro" id="IPR023631">
    <property type="entry name" value="Amidase_dom"/>
</dbReference>
<dbReference type="InterPro" id="IPR036928">
    <property type="entry name" value="AS_sf"/>
</dbReference>
<dbReference type="InterPro" id="IPR004412">
    <property type="entry name" value="GatA"/>
</dbReference>
<dbReference type="NCBIfam" id="TIGR00132">
    <property type="entry name" value="gatA"/>
    <property type="match status" value="1"/>
</dbReference>
<dbReference type="PANTHER" id="PTHR11895:SF151">
    <property type="entry name" value="GLUTAMYL-TRNA(GLN) AMIDOTRANSFERASE SUBUNIT A"/>
    <property type="match status" value="1"/>
</dbReference>
<dbReference type="PANTHER" id="PTHR11895">
    <property type="entry name" value="TRANSAMIDASE"/>
    <property type="match status" value="1"/>
</dbReference>
<dbReference type="Pfam" id="PF01425">
    <property type="entry name" value="Amidase"/>
    <property type="match status" value="1"/>
</dbReference>
<dbReference type="SUPFAM" id="SSF75304">
    <property type="entry name" value="Amidase signature (AS) enzymes"/>
    <property type="match status" value="1"/>
</dbReference>
<dbReference type="PROSITE" id="PS00571">
    <property type="entry name" value="AMIDASES"/>
    <property type="match status" value="1"/>
</dbReference>
<protein>
    <recommendedName>
        <fullName evidence="1">Glutamyl-tRNA(Gln) amidotransferase subunit A</fullName>
        <shortName evidence="1">Glu-ADT subunit A</shortName>
        <ecNumber evidence="1">6.3.5.7</ecNumber>
    </recommendedName>
</protein>
<proteinExistence type="inferred from homology"/>
<accession>Q8DR10</accession>
<feature type="chain" id="PRO_0000105217" description="Glutamyl-tRNA(Gln) amidotransferase subunit A">
    <location>
        <begin position="1"/>
        <end position="488"/>
    </location>
</feature>
<feature type="active site" description="Charge relay system" evidence="1">
    <location>
        <position position="77"/>
    </location>
</feature>
<feature type="active site" description="Charge relay system" evidence="1">
    <location>
        <position position="152"/>
    </location>
</feature>
<feature type="active site" description="Acyl-ester intermediate" evidence="1">
    <location>
        <position position="176"/>
    </location>
</feature>
<reference key="1">
    <citation type="journal article" date="2001" name="J. Bacteriol.">
        <title>Genome of the bacterium Streptococcus pneumoniae strain R6.</title>
        <authorList>
            <person name="Hoskins J."/>
            <person name="Alborn W.E. Jr."/>
            <person name="Arnold J."/>
            <person name="Blaszczak L.C."/>
            <person name="Burgett S."/>
            <person name="DeHoff B.S."/>
            <person name="Estrem S.T."/>
            <person name="Fritz L."/>
            <person name="Fu D.-J."/>
            <person name="Fuller W."/>
            <person name="Geringer C."/>
            <person name="Gilmour R."/>
            <person name="Glass J.S."/>
            <person name="Khoja H."/>
            <person name="Kraft A.R."/>
            <person name="Lagace R.E."/>
            <person name="LeBlanc D.J."/>
            <person name="Lee L.N."/>
            <person name="Lefkowitz E.J."/>
            <person name="Lu J."/>
            <person name="Matsushima P."/>
            <person name="McAhren S.M."/>
            <person name="McHenney M."/>
            <person name="McLeaster K."/>
            <person name="Mundy C.W."/>
            <person name="Nicas T.I."/>
            <person name="Norris F.H."/>
            <person name="O'Gara M."/>
            <person name="Peery R.B."/>
            <person name="Robertson G.T."/>
            <person name="Rockey P."/>
            <person name="Sun P.-M."/>
            <person name="Winkler M.E."/>
            <person name="Yang Y."/>
            <person name="Young-Bellido M."/>
            <person name="Zhao G."/>
            <person name="Zook C.A."/>
            <person name="Baltz R.H."/>
            <person name="Jaskunas S.R."/>
            <person name="Rosteck P.R. Jr."/>
            <person name="Skatrud P.L."/>
            <person name="Glass J.I."/>
        </authorList>
    </citation>
    <scope>NUCLEOTIDE SEQUENCE [LARGE SCALE GENOMIC DNA]</scope>
    <source>
        <strain>ATCC BAA-255 / R6</strain>
    </source>
</reference>
<name>GATA_STRR6</name>
<sequence length="488" mass="52005">MTFNNKTIEELHNLLVSKEISATELTQATLENIKSREEALNSFVTIAEEQALVQAKAIDEAGIDADNVLSGIPLAVKDNISTDGILTTAASKMLYNYEPIFDATAVANAKTKGMIVVGKTNMDEFAMGGSGETSHYGATKNAWDHSKVPGGSSSGSAAAVASGQVRLSLGSDTGGSIRQPAAFNGIVGLKPTYGTVSRFGLIAFGSSLDQIGPFAPTVKENALLLNAIASEDAKDSTSAPVRIADFTSKIGQDIKGMKIALPKEYLGEGIDPEVKETILNAAKHFEKLGAIVEEVSLPHSKYGVAVYYIIASSEASSNLQRFDGIRYGYRAEDATNLDEIYVNSRSQGFGEEVKRRIMLGTFSLSSGYYDAYYKKAGQVRTLIIQDFEKVFADYDLILGPTAPSVAYDLDSLNHDPVAMYLADLLTIPVNLAGLPGISIPAGFSQGLPVGLQLIGPKHSEETIYQVAAAFEATTGYHKQQPVIFGGDN</sequence>
<comment type="function">
    <text evidence="1">Allows the formation of correctly charged Gln-tRNA(Gln) through the transamidation of misacylated Glu-tRNA(Gln) in organisms which lack glutaminyl-tRNA synthetase. The reaction takes place in the presence of glutamine and ATP through an activated gamma-phospho-Glu-tRNA(Gln).</text>
</comment>
<comment type="catalytic activity">
    <reaction evidence="1">
        <text>L-glutamyl-tRNA(Gln) + L-glutamine + ATP + H2O = L-glutaminyl-tRNA(Gln) + L-glutamate + ADP + phosphate + H(+)</text>
        <dbReference type="Rhea" id="RHEA:17521"/>
        <dbReference type="Rhea" id="RHEA-COMP:9681"/>
        <dbReference type="Rhea" id="RHEA-COMP:9684"/>
        <dbReference type="ChEBI" id="CHEBI:15377"/>
        <dbReference type="ChEBI" id="CHEBI:15378"/>
        <dbReference type="ChEBI" id="CHEBI:29985"/>
        <dbReference type="ChEBI" id="CHEBI:30616"/>
        <dbReference type="ChEBI" id="CHEBI:43474"/>
        <dbReference type="ChEBI" id="CHEBI:58359"/>
        <dbReference type="ChEBI" id="CHEBI:78520"/>
        <dbReference type="ChEBI" id="CHEBI:78521"/>
        <dbReference type="ChEBI" id="CHEBI:456216"/>
        <dbReference type="EC" id="6.3.5.7"/>
    </reaction>
</comment>
<comment type="subunit">
    <text evidence="1">Heterotrimer of A, B and C subunits.</text>
</comment>
<comment type="similarity">
    <text evidence="1">Belongs to the amidase family. GatA subfamily.</text>
</comment>
<evidence type="ECO:0000255" key="1">
    <source>
        <dbReference type="HAMAP-Rule" id="MF_00120"/>
    </source>
</evidence>
<organism>
    <name type="scientific">Streptococcus pneumoniae (strain ATCC BAA-255 / R6)</name>
    <dbReference type="NCBI Taxonomy" id="171101"/>
    <lineage>
        <taxon>Bacteria</taxon>
        <taxon>Bacillati</taxon>
        <taxon>Bacillota</taxon>
        <taxon>Bacilli</taxon>
        <taxon>Lactobacillales</taxon>
        <taxon>Streptococcaceae</taxon>
        <taxon>Streptococcus</taxon>
    </lineage>
</organism>
<keyword id="KW-0067">ATP-binding</keyword>
<keyword id="KW-0436">Ligase</keyword>
<keyword id="KW-0547">Nucleotide-binding</keyword>
<keyword id="KW-0648">Protein biosynthesis</keyword>
<keyword id="KW-1185">Reference proteome</keyword>
<gene>
    <name evidence="1" type="primary">gatA</name>
    <name type="ordered locus">spr0394</name>
</gene>